<name>HSLU_CAMJR</name>
<evidence type="ECO:0000255" key="1">
    <source>
        <dbReference type="HAMAP-Rule" id="MF_00249"/>
    </source>
</evidence>
<dbReference type="EMBL" id="CP000025">
    <property type="protein sequence ID" value="AAW34555.1"/>
    <property type="molecule type" value="Genomic_DNA"/>
</dbReference>
<dbReference type="RefSeq" id="WP_002867647.1">
    <property type="nucleotide sequence ID" value="NC_003912.7"/>
</dbReference>
<dbReference type="SMR" id="Q5HVB2"/>
<dbReference type="KEGG" id="cjr:CJE0764"/>
<dbReference type="HOGENOM" id="CLU_033123_0_0_7"/>
<dbReference type="GO" id="GO:0009376">
    <property type="term" value="C:HslUV protease complex"/>
    <property type="evidence" value="ECO:0007669"/>
    <property type="project" value="UniProtKB-UniRule"/>
</dbReference>
<dbReference type="GO" id="GO:0005524">
    <property type="term" value="F:ATP binding"/>
    <property type="evidence" value="ECO:0007669"/>
    <property type="project" value="UniProtKB-UniRule"/>
</dbReference>
<dbReference type="GO" id="GO:0016887">
    <property type="term" value="F:ATP hydrolysis activity"/>
    <property type="evidence" value="ECO:0007669"/>
    <property type="project" value="InterPro"/>
</dbReference>
<dbReference type="GO" id="GO:0008233">
    <property type="term" value="F:peptidase activity"/>
    <property type="evidence" value="ECO:0007669"/>
    <property type="project" value="InterPro"/>
</dbReference>
<dbReference type="GO" id="GO:0036402">
    <property type="term" value="F:proteasome-activating activity"/>
    <property type="evidence" value="ECO:0007669"/>
    <property type="project" value="UniProtKB-UniRule"/>
</dbReference>
<dbReference type="GO" id="GO:0043335">
    <property type="term" value="P:protein unfolding"/>
    <property type="evidence" value="ECO:0007669"/>
    <property type="project" value="UniProtKB-UniRule"/>
</dbReference>
<dbReference type="GO" id="GO:0051603">
    <property type="term" value="P:proteolysis involved in protein catabolic process"/>
    <property type="evidence" value="ECO:0007669"/>
    <property type="project" value="TreeGrafter"/>
</dbReference>
<dbReference type="Gene3D" id="1.10.8.60">
    <property type="match status" value="1"/>
</dbReference>
<dbReference type="Gene3D" id="1.10.8.10">
    <property type="entry name" value="DNA helicase RuvA subunit, C-terminal domain"/>
    <property type="match status" value="1"/>
</dbReference>
<dbReference type="Gene3D" id="3.40.50.300">
    <property type="entry name" value="P-loop containing nucleotide triphosphate hydrolases"/>
    <property type="match status" value="2"/>
</dbReference>
<dbReference type="HAMAP" id="MF_00249">
    <property type="entry name" value="HslU"/>
    <property type="match status" value="1"/>
</dbReference>
<dbReference type="InterPro" id="IPR003593">
    <property type="entry name" value="AAA+_ATPase"/>
</dbReference>
<dbReference type="InterPro" id="IPR050052">
    <property type="entry name" value="ATP-dep_Clp_protease_ClpX"/>
</dbReference>
<dbReference type="InterPro" id="IPR003959">
    <property type="entry name" value="ATPase_AAA_core"/>
</dbReference>
<dbReference type="InterPro" id="IPR019489">
    <property type="entry name" value="Clp_ATPase_C"/>
</dbReference>
<dbReference type="InterPro" id="IPR004491">
    <property type="entry name" value="HslU"/>
</dbReference>
<dbReference type="InterPro" id="IPR027417">
    <property type="entry name" value="P-loop_NTPase"/>
</dbReference>
<dbReference type="NCBIfam" id="TIGR00390">
    <property type="entry name" value="hslU"/>
    <property type="match status" value="1"/>
</dbReference>
<dbReference type="NCBIfam" id="NF003544">
    <property type="entry name" value="PRK05201.1"/>
    <property type="match status" value="1"/>
</dbReference>
<dbReference type="PANTHER" id="PTHR48102">
    <property type="entry name" value="ATP-DEPENDENT CLP PROTEASE ATP-BINDING SUBUNIT CLPX-LIKE, MITOCHONDRIAL-RELATED"/>
    <property type="match status" value="1"/>
</dbReference>
<dbReference type="PANTHER" id="PTHR48102:SF3">
    <property type="entry name" value="ATP-DEPENDENT PROTEASE ATPASE SUBUNIT HSLU"/>
    <property type="match status" value="1"/>
</dbReference>
<dbReference type="Pfam" id="PF00004">
    <property type="entry name" value="AAA"/>
    <property type="match status" value="1"/>
</dbReference>
<dbReference type="Pfam" id="PF07724">
    <property type="entry name" value="AAA_2"/>
    <property type="match status" value="1"/>
</dbReference>
<dbReference type="Pfam" id="PF10431">
    <property type="entry name" value="ClpB_D2-small"/>
    <property type="match status" value="1"/>
</dbReference>
<dbReference type="SMART" id="SM00382">
    <property type="entry name" value="AAA"/>
    <property type="match status" value="1"/>
</dbReference>
<dbReference type="SMART" id="SM01086">
    <property type="entry name" value="ClpB_D2-small"/>
    <property type="match status" value="1"/>
</dbReference>
<dbReference type="SUPFAM" id="SSF52540">
    <property type="entry name" value="P-loop containing nucleoside triphosphate hydrolases"/>
    <property type="match status" value="1"/>
</dbReference>
<proteinExistence type="inferred from homology"/>
<accession>Q5HVB2</accession>
<sequence>MNLTPKEIVKFLDDYVIGQKKAKKIIAIALRNRYRRMQLSPELQDDIVPKNILMIGSTGVGKTEIARRLAKMMGFPFIKIEASKYTEVGFVGRDVESMVRDLANAALNLVKNEQREKNKDKIDEFIENKILEKLLPPLPKGISDEKQEEYKNSLEKMRTKLRNGNLDESTIEIEISQNMFDTNPNLPPEMGAMQDIVKVIGVGSKKVKKEMKIKDAKNALKNEAGEKILDQESIKSEALKRAENEGIIFIDEIDKIAVSSGNSNRQDPSKEGVQRDLLPIVEGSNVQTKIGTLKTDHILFIAAGAFHLSKPSDLIPELQGRFPLRVELDSLDDKALYEILTRPKNSLLKQYSQLLKTENLELEFNDEAIKEIAKIASRANEEMQDIGARRLHTVIEKLLEDLSFEADEYAGKKFVVDKKMVEEKLGDIIENKDLARYIL</sequence>
<gene>
    <name evidence="1" type="primary">hslU</name>
    <name type="ordered locus">CJE0764</name>
</gene>
<organism>
    <name type="scientific">Campylobacter jejuni (strain RM1221)</name>
    <dbReference type="NCBI Taxonomy" id="195099"/>
    <lineage>
        <taxon>Bacteria</taxon>
        <taxon>Pseudomonadati</taxon>
        <taxon>Campylobacterota</taxon>
        <taxon>Epsilonproteobacteria</taxon>
        <taxon>Campylobacterales</taxon>
        <taxon>Campylobacteraceae</taxon>
        <taxon>Campylobacter</taxon>
    </lineage>
</organism>
<feature type="chain" id="PRO_0000160493" description="ATP-dependent protease ATPase subunit HslU">
    <location>
        <begin position="1"/>
        <end position="439"/>
    </location>
</feature>
<feature type="binding site" evidence="1">
    <location>
        <position position="17"/>
    </location>
    <ligand>
        <name>ATP</name>
        <dbReference type="ChEBI" id="CHEBI:30616"/>
    </ligand>
</feature>
<feature type="binding site" evidence="1">
    <location>
        <begin position="59"/>
        <end position="64"/>
    </location>
    <ligand>
        <name>ATP</name>
        <dbReference type="ChEBI" id="CHEBI:30616"/>
    </ligand>
</feature>
<feature type="binding site" evidence="1">
    <location>
        <position position="251"/>
    </location>
    <ligand>
        <name>ATP</name>
        <dbReference type="ChEBI" id="CHEBI:30616"/>
    </ligand>
</feature>
<feature type="binding site" evidence="1">
    <location>
        <position position="317"/>
    </location>
    <ligand>
        <name>ATP</name>
        <dbReference type="ChEBI" id="CHEBI:30616"/>
    </ligand>
</feature>
<feature type="binding site" evidence="1">
    <location>
        <position position="389"/>
    </location>
    <ligand>
        <name>ATP</name>
        <dbReference type="ChEBI" id="CHEBI:30616"/>
    </ligand>
</feature>
<reference key="1">
    <citation type="journal article" date="2005" name="PLoS Biol.">
        <title>Major structural differences and novel potential virulence mechanisms from the genomes of multiple Campylobacter species.</title>
        <authorList>
            <person name="Fouts D.E."/>
            <person name="Mongodin E.F."/>
            <person name="Mandrell R.E."/>
            <person name="Miller W.G."/>
            <person name="Rasko D.A."/>
            <person name="Ravel J."/>
            <person name="Brinkac L.M."/>
            <person name="DeBoy R.T."/>
            <person name="Parker C.T."/>
            <person name="Daugherty S.C."/>
            <person name="Dodson R.J."/>
            <person name="Durkin A.S."/>
            <person name="Madupu R."/>
            <person name="Sullivan S.A."/>
            <person name="Shetty J.U."/>
            <person name="Ayodeji M.A."/>
            <person name="Shvartsbeyn A."/>
            <person name="Schatz M.C."/>
            <person name="Badger J.H."/>
            <person name="Fraser C.M."/>
            <person name="Nelson K.E."/>
        </authorList>
    </citation>
    <scope>NUCLEOTIDE SEQUENCE [LARGE SCALE GENOMIC DNA]</scope>
    <source>
        <strain>RM1221</strain>
    </source>
</reference>
<comment type="function">
    <text evidence="1">ATPase subunit of a proteasome-like degradation complex; this subunit has chaperone activity. The binding of ATP and its subsequent hydrolysis by HslU are essential for unfolding of protein substrates subsequently hydrolyzed by HslV. HslU recognizes the N-terminal part of its protein substrates and unfolds these before they are guided to HslV for hydrolysis.</text>
</comment>
<comment type="subunit">
    <text evidence="1">A double ring-shaped homohexamer of HslV is capped on each side by a ring-shaped HslU homohexamer. The assembly of the HslU/HslV complex is dependent on binding of ATP.</text>
</comment>
<comment type="subcellular location">
    <subcellularLocation>
        <location evidence="1">Cytoplasm</location>
    </subcellularLocation>
</comment>
<comment type="similarity">
    <text evidence="1">Belongs to the ClpX chaperone family. HslU subfamily.</text>
</comment>
<keyword id="KW-0067">ATP-binding</keyword>
<keyword id="KW-0143">Chaperone</keyword>
<keyword id="KW-0963">Cytoplasm</keyword>
<keyword id="KW-0547">Nucleotide-binding</keyword>
<protein>
    <recommendedName>
        <fullName evidence="1">ATP-dependent protease ATPase subunit HslU</fullName>
    </recommendedName>
    <alternativeName>
        <fullName evidence="1">Unfoldase HslU</fullName>
    </alternativeName>
</protein>